<gene>
    <name type="primary">ybaA</name>
    <name type="ordered locus">SF0401</name>
    <name type="ordered locus">S0408</name>
</gene>
<keyword id="KW-0002">3D-structure</keyword>
<keyword id="KW-1185">Reference proteome</keyword>
<organism>
    <name type="scientific">Shigella flexneri</name>
    <dbReference type="NCBI Taxonomy" id="623"/>
    <lineage>
        <taxon>Bacteria</taxon>
        <taxon>Pseudomonadati</taxon>
        <taxon>Pseudomonadota</taxon>
        <taxon>Gammaproteobacteria</taxon>
        <taxon>Enterobacterales</taxon>
        <taxon>Enterobacteriaceae</taxon>
        <taxon>Shigella</taxon>
    </lineage>
</organism>
<proteinExistence type="evidence at protein level"/>
<dbReference type="EMBL" id="AE005674">
    <property type="protein sequence ID" value="AAN42057.1"/>
    <property type="molecule type" value="Genomic_DNA"/>
</dbReference>
<dbReference type="EMBL" id="AE014073">
    <property type="protein sequence ID" value="AAP15934.1"/>
    <property type="molecule type" value="Genomic_DNA"/>
</dbReference>
<dbReference type="RefSeq" id="NP_706350.1">
    <property type="nucleotide sequence ID" value="NC_004337.2"/>
</dbReference>
<dbReference type="RefSeq" id="WP_000878140.1">
    <property type="nucleotide sequence ID" value="NZ_WPGW01000015.1"/>
</dbReference>
<dbReference type="PDB" id="2OKQ">
    <property type="method" value="X-ray"/>
    <property type="resolution" value="1.80 A"/>
    <property type="chains" value="A/B=1-117"/>
</dbReference>
<dbReference type="PDBsum" id="2OKQ"/>
<dbReference type="SMR" id="P0AAQ9"/>
<dbReference type="STRING" id="198214.SF0401"/>
<dbReference type="PaxDb" id="198214-SF0401"/>
<dbReference type="GeneID" id="1027736"/>
<dbReference type="KEGG" id="sfl:SF0401"/>
<dbReference type="KEGG" id="sfx:S0408"/>
<dbReference type="PATRIC" id="fig|198214.7.peg.460"/>
<dbReference type="HOGENOM" id="CLU_136844_0_0_6"/>
<dbReference type="EvolutionaryTrace" id="P0AAQ9"/>
<dbReference type="Proteomes" id="UP000001006">
    <property type="component" value="Chromosome"/>
</dbReference>
<dbReference type="Proteomes" id="UP000002673">
    <property type="component" value="Chromosome"/>
</dbReference>
<dbReference type="Gene3D" id="3.30.70.100">
    <property type="match status" value="1"/>
</dbReference>
<dbReference type="InterPro" id="IPR011008">
    <property type="entry name" value="Dimeric_a/b-barrel"/>
</dbReference>
<dbReference type="InterPro" id="IPR009874">
    <property type="entry name" value="DUF1428"/>
</dbReference>
<dbReference type="Pfam" id="PF07237">
    <property type="entry name" value="DUF1428"/>
    <property type="match status" value="1"/>
</dbReference>
<dbReference type="PIRSF" id="PIRSF007028">
    <property type="entry name" value="UCP007028"/>
    <property type="match status" value="1"/>
</dbReference>
<dbReference type="SUPFAM" id="SSF54909">
    <property type="entry name" value="Dimeric alpha+beta barrel"/>
    <property type="match status" value="1"/>
</dbReference>
<accession>P0AAQ9</accession>
<accession>P09161</accession>
<evidence type="ECO:0007829" key="1">
    <source>
        <dbReference type="PDB" id="2OKQ"/>
    </source>
</evidence>
<name>YBAA_SHIFL</name>
<reference key="1">
    <citation type="journal article" date="2002" name="Nucleic Acids Res.">
        <title>Genome sequence of Shigella flexneri 2a: insights into pathogenicity through comparison with genomes of Escherichia coli K12 and O157.</title>
        <authorList>
            <person name="Jin Q."/>
            <person name="Yuan Z."/>
            <person name="Xu J."/>
            <person name="Wang Y."/>
            <person name="Shen Y."/>
            <person name="Lu W."/>
            <person name="Wang J."/>
            <person name="Liu H."/>
            <person name="Yang J."/>
            <person name="Yang F."/>
            <person name="Zhang X."/>
            <person name="Zhang J."/>
            <person name="Yang G."/>
            <person name="Wu H."/>
            <person name="Qu D."/>
            <person name="Dong J."/>
            <person name="Sun L."/>
            <person name="Xue Y."/>
            <person name="Zhao A."/>
            <person name="Gao Y."/>
            <person name="Zhu J."/>
            <person name="Kan B."/>
            <person name="Ding K."/>
            <person name="Chen S."/>
            <person name="Cheng H."/>
            <person name="Yao Z."/>
            <person name="He B."/>
            <person name="Chen R."/>
            <person name="Ma D."/>
            <person name="Qiang B."/>
            <person name="Wen Y."/>
            <person name="Hou Y."/>
            <person name="Yu J."/>
        </authorList>
    </citation>
    <scope>NUCLEOTIDE SEQUENCE [LARGE SCALE GENOMIC DNA]</scope>
    <source>
        <strain>301 / Serotype 2a</strain>
    </source>
</reference>
<reference key="2">
    <citation type="journal article" date="2003" name="Infect. Immun.">
        <title>Complete genome sequence and comparative genomics of Shigella flexneri serotype 2a strain 2457T.</title>
        <authorList>
            <person name="Wei J."/>
            <person name="Goldberg M.B."/>
            <person name="Burland V."/>
            <person name="Venkatesan M.M."/>
            <person name="Deng W."/>
            <person name="Fournier G."/>
            <person name="Mayhew G.F."/>
            <person name="Plunkett G. III"/>
            <person name="Rose D.J."/>
            <person name="Darling A."/>
            <person name="Mau B."/>
            <person name="Perna N.T."/>
            <person name="Payne S.M."/>
            <person name="Runyen-Janecky L.J."/>
            <person name="Zhou S."/>
            <person name="Schwartz D.C."/>
            <person name="Blattner F.R."/>
        </authorList>
    </citation>
    <scope>NUCLEOTIDE SEQUENCE [LARGE SCALE GENOMIC DNA]</scope>
    <source>
        <strain>ATCC 700930 / 2457T / Serotype 2a</strain>
    </source>
</reference>
<reference key="3">
    <citation type="submission" date="2007-02" db="PDB data bank">
        <title>Crystal structure of unknown conserved ybaA protein from Shigella flexneri.</title>
        <authorList>
            <consortium name="Midwest center for structural genomics (MCSG)"/>
        </authorList>
    </citation>
    <scope>X-RAY CRYSTALLOGRAPHY (1.8 ANGSTROMS)</scope>
</reference>
<protein>
    <recommendedName>
        <fullName>Uncharacterized protein YbaA</fullName>
    </recommendedName>
</protein>
<feature type="chain" id="PRO_0000168615" description="Uncharacterized protein YbaA">
    <location>
        <begin position="1"/>
        <end position="117"/>
    </location>
</feature>
<feature type="strand" evidence="1">
    <location>
        <begin position="3"/>
        <end position="12"/>
    </location>
</feature>
<feature type="helix" evidence="1">
    <location>
        <begin position="13"/>
        <end position="15"/>
    </location>
</feature>
<feature type="helix" evidence="1">
    <location>
        <begin position="16"/>
        <end position="32"/>
    </location>
</feature>
<feature type="strand" evidence="1">
    <location>
        <begin position="36"/>
        <end position="45"/>
    </location>
</feature>
<feature type="helix" evidence="1">
    <location>
        <begin position="54"/>
        <end position="57"/>
    </location>
</feature>
<feature type="strand" evidence="1">
    <location>
        <begin position="64"/>
        <end position="74"/>
    </location>
</feature>
<feature type="helix" evidence="1">
    <location>
        <begin position="76"/>
        <end position="87"/>
    </location>
</feature>
<feature type="helix" evidence="1">
    <location>
        <begin position="90"/>
        <end position="94"/>
    </location>
</feature>
<feature type="turn" evidence="1">
    <location>
        <begin position="103"/>
        <end position="105"/>
    </location>
</feature>
<feature type="strand" evidence="1">
    <location>
        <begin position="107"/>
        <end position="117"/>
    </location>
</feature>
<sequence>MKYVDGFVVAVPADKKDAYREMAAKAAPLFKEFGALRIVECWASDVPDGKVTDFRMAVKAEENEEVVFSWIEYPSKEVRDAANQKMMSDPRMKEFGESMPFDGKRMIYGGFESIIDE</sequence>